<feature type="chain" id="PRO_0000357293" description="Very-long-chain 3-oxoacyl-CoA reductase">
    <location>
        <begin position="1"/>
        <end position="339"/>
    </location>
</feature>
<feature type="transmembrane region" description="Helical" evidence="4">
    <location>
        <begin position="19"/>
        <end position="39"/>
    </location>
</feature>
<feature type="active site" description="Proton donor" evidence="2">
    <location>
        <position position="213"/>
    </location>
</feature>
<feature type="active site" description="Lowers pKa of active site Tyr" evidence="2">
    <location>
        <position position="217"/>
    </location>
</feature>
<feature type="binding site" evidence="1">
    <location>
        <position position="64"/>
    </location>
    <ligand>
        <name>NADP(+)</name>
        <dbReference type="ChEBI" id="CHEBI:58349"/>
    </ligand>
</feature>
<feature type="binding site" evidence="1">
    <location>
        <position position="105"/>
    </location>
    <ligand>
        <name>NADP(+)</name>
        <dbReference type="ChEBI" id="CHEBI:58349"/>
    </ligand>
</feature>
<feature type="binding site" evidence="1">
    <location>
        <position position="119"/>
    </location>
    <ligand>
        <name>NADP(+)</name>
        <dbReference type="ChEBI" id="CHEBI:58349"/>
    </ligand>
</feature>
<feature type="binding site" evidence="1">
    <location>
        <position position="127"/>
    </location>
    <ligand>
        <name>NADP(+)</name>
        <dbReference type="ChEBI" id="CHEBI:58349"/>
    </ligand>
</feature>
<feature type="binding site" evidence="2">
    <location>
        <position position="146"/>
    </location>
    <ligand>
        <name>NADP(+)</name>
        <dbReference type="ChEBI" id="CHEBI:58349"/>
    </ligand>
</feature>
<feature type="binding site" evidence="2">
    <location>
        <position position="213"/>
    </location>
    <ligand>
        <name>NADP(+)</name>
        <dbReference type="ChEBI" id="CHEBI:58349"/>
    </ligand>
</feature>
<feature type="binding site" evidence="2">
    <location>
        <position position="217"/>
    </location>
    <ligand>
        <name>NADP(+)</name>
        <dbReference type="ChEBI" id="CHEBI:58349"/>
    </ligand>
</feature>
<feature type="binding site" evidence="2">
    <location>
        <position position="246"/>
    </location>
    <ligand>
        <name>NADP(+)</name>
        <dbReference type="ChEBI" id="CHEBI:58349"/>
    </ligand>
</feature>
<feature type="binding site" evidence="1">
    <location>
        <position position="248"/>
    </location>
    <ligand>
        <name>NADP(+)</name>
        <dbReference type="ChEBI" id="CHEBI:58349"/>
    </ligand>
</feature>
<proteinExistence type="inferred from homology"/>
<reference key="1">
    <citation type="journal article" date="2009" name="Genome Res.">
        <title>Comparative genomic analyses of the human fungal pathogens Coccidioides and their relatives.</title>
        <authorList>
            <person name="Sharpton T.J."/>
            <person name="Stajich J.E."/>
            <person name="Rounsley S.D."/>
            <person name="Gardner M.J."/>
            <person name="Wortman J.R."/>
            <person name="Jordar V.S."/>
            <person name="Maiti R."/>
            <person name="Kodira C.D."/>
            <person name="Neafsey D.E."/>
            <person name="Zeng Q."/>
            <person name="Hung C.-Y."/>
            <person name="McMahan C."/>
            <person name="Muszewska A."/>
            <person name="Grynberg M."/>
            <person name="Mandel M.A."/>
            <person name="Kellner E.M."/>
            <person name="Barker B.M."/>
            <person name="Galgiani J.N."/>
            <person name="Orbach M.J."/>
            <person name="Kirkland T.N."/>
            <person name="Cole G.T."/>
            <person name="Henn M.R."/>
            <person name="Birren B.W."/>
            <person name="Taylor J.W."/>
        </authorList>
    </citation>
    <scope>NUCLEOTIDE SEQUENCE [LARGE SCALE GENOMIC DNA]</scope>
    <source>
        <strain>NAm1 / WU24</strain>
    </source>
</reference>
<gene>
    <name type="ORF">HCAG_07127</name>
</gene>
<evidence type="ECO:0000250" key="1">
    <source>
        <dbReference type="UniProtKB" id="L0E2Z4"/>
    </source>
</evidence>
<evidence type="ECO:0000250" key="2">
    <source>
        <dbReference type="UniProtKB" id="O93868"/>
    </source>
</evidence>
<evidence type="ECO:0000250" key="3">
    <source>
        <dbReference type="UniProtKB" id="P38286"/>
    </source>
</evidence>
<evidence type="ECO:0000255" key="4">
    <source>
        <dbReference type="HAMAP-Rule" id="MF_03107"/>
    </source>
</evidence>
<protein>
    <recommendedName>
        <fullName evidence="4">Very-long-chain 3-oxoacyl-CoA reductase</fullName>
        <ecNumber evidence="4">1.1.1.330</ecNumber>
    </recommendedName>
    <alternativeName>
        <fullName evidence="4">3-ketoacyl-CoA reductase</fullName>
        <shortName evidence="4">3-ketoreductase</shortName>
        <shortName evidence="4">KAR</shortName>
    </alternativeName>
    <alternativeName>
        <fullName evidence="4">Microsomal beta-keto-reductase</fullName>
    </alternativeName>
</protein>
<sequence>MDRLLQFRFESAPGWQSNVALFLLSIGGLFTACKLFSFCRALLSIFVLPGQKLSKFGPKGSWALVTGASDGIGKEYSLQLARAGYNILLVSRTTSKLAAVADEIKSKSPTVQTKVFAMDFFKNNDGDYENLKLLIQDLDISILVNNVGRSHSIPTPFVLTPLEELENIIMINCTGTLRITQLVAPGMMQRKRGLILTMASFAGMIPTPLLATYCGSKAFLQYWSIALGAELQPYGVQVELVQSHLVTSAMSKIRRPTVTVPIPRDLVRAVLSKIGRGSGLSAYAYTSVPYWSHGLMAYALTQVLGHMGKFVLGYNKALHESIRKRALRKAEREKNKKST</sequence>
<name>MKAR_AJECN</name>
<accession>A6RBW9</accession>
<comment type="function">
    <text evidence="4">Component of the microsomal membrane bound fatty acid elongation system, which produces the 26-carbon very long-chain fatty acids (VLCFA) from palmitate. Catalyzes the reduction of the 3-ketoacyl-CoA intermediate that is formed in each cycle of fatty acid elongation. VLCFAs serve as precursors for ceramide and sphingolipids.</text>
</comment>
<comment type="catalytic activity">
    <reaction evidence="4">
        <text>a very-long-chain (3R)-3-hydroxyacyl-CoA + NADP(+) = a very-long-chain 3-oxoacyl-CoA + NADPH + H(+)</text>
        <dbReference type="Rhea" id="RHEA:48680"/>
        <dbReference type="ChEBI" id="CHEBI:15378"/>
        <dbReference type="ChEBI" id="CHEBI:57783"/>
        <dbReference type="ChEBI" id="CHEBI:58349"/>
        <dbReference type="ChEBI" id="CHEBI:85440"/>
        <dbReference type="ChEBI" id="CHEBI:90725"/>
        <dbReference type="EC" id="1.1.1.330"/>
    </reaction>
</comment>
<comment type="pathway">
    <text evidence="3">Lipid metabolism; fatty acid biosynthesis.</text>
</comment>
<comment type="subcellular location">
    <subcellularLocation>
        <location evidence="4">Endoplasmic reticulum membrane</location>
        <topology evidence="4">Single-pass membrane protein</topology>
    </subcellularLocation>
</comment>
<comment type="similarity">
    <text evidence="4">Belongs to the short-chain dehydrogenases/reductases (SDR) family.</text>
</comment>
<dbReference type="EC" id="1.1.1.330" evidence="4"/>
<dbReference type="EMBL" id="CH476662">
    <property type="protein sequence ID" value="EDN10666.1"/>
    <property type="molecule type" value="Genomic_DNA"/>
</dbReference>
<dbReference type="RefSeq" id="XP_001537705.1">
    <property type="nucleotide sequence ID" value="XM_001537655.1"/>
</dbReference>
<dbReference type="SMR" id="A6RBW9"/>
<dbReference type="STRING" id="339724.A6RBW9"/>
<dbReference type="GeneID" id="5444237"/>
<dbReference type="KEGG" id="aje:HCAG_07127"/>
<dbReference type="VEuPathDB" id="FungiDB:HCAG_07127"/>
<dbReference type="HOGENOM" id="CLU_010194_38_0_1"/>
<dbReference type="OMA" id="LVAPGMM"/>
<dbReference type="OrthoDB" id="3192at299071"/>
<dbReference type="UniPathway" id="UPA00094"/>
<dbReference type="Proteomes" id="UP000009297">
    <property type="component" value="Unassembled WGS sequence"/>
</dbReference>
<dbReference type="GO" id="GO:0005789">
    <property type="term" value="C:endoplasmic reticulum membrane"/>
    <property type="evidence" value="ECO:0007669"/>
    <property type="project" value="UniProtKB-SubCell"/>
</dbReference>
<dbReference type="GO" id="GO:0045703">
    <property type="term" value="F:ketoreductase activity"/>
    <property type="evidence" value="ECO:0007669"/>
    <property type="project" value="UniProtKB-UniRule"/>
</dbReference>
<dbReference type="GO" id="GO:0141040">
    <property type="term" value="F:very-long-chain 3-oxoacyl-CoA reductase activity"/>
    <property type="evidence" value="ECO:0007669"/>
    <property type="project" value="UniProtKB-EC"/>
</dbReference>
<dbReference type="GO" id="GO:0030497">
    <property type="term" value="P:fatty acid elongation"/>
    <property type="evidence" value="ECO:0007669"/>
    <property type="project" value="UniProtKB-UniRule"/>
</dbReference>
<dbReference type="GO" id="GO:0044550">
    <property type="term" value="P:secondary metabolite biosynthetic process"/>
    <property type="evidence" value="ECO:0007669"/>
    <property type="project" value="UniProtKB-ARBA"/>
</dbReference>
<dbReference type="CDD" id="cd05356">
    <property type="entry name" value="17beta-HSD1_like_SDR_c"/>
    <property type="match status" value="1"/>
</dbReference>
<dbReference type="FunFam" id="3.40.50.720:FF:000317">
    <property type="entry name" value="Very-long-chain 3-oxoacyl-CoA reductase"/>
    <property type="match status" value="1"/>
</dbReference>
<dbReference type="Gene3D" id="3.40.50.720">
    <property type="entry name" value="NAD(P)-binding Rossmann-like Domain"/>
    <property type="match status" value="1"/>
</dbReference>
<dbReference type="HAMAP" id="MF_03107">
    <property type="entry name" value="3_ketoreductase"/>
    <property type="match status" value="1"/>
</dbReference>
<dbReference type="InterPro" id="IPR027533">
    <property type="entry name" value="3_ketoreductase_fungal"/>
</dbReference>
<dbReference type="InterPro" id="IPR036291">
    <property type="entry name" value="NAD(P)-bd_dom_sf"/>
</dbReference>
<dbReference type="InterPro" id="IPR020904">
    <property type="entry name" value="Sc_DH/Rdtase_CS"/>
</dbReference>
<dbReference type="InterPro" id="IPR002347">
    <property type="entry name" value="SDR_fam"/>
</dbReference>
<dbReference type="PANTHER" id="PTHR43086:SF2">
    <property type="entry name" value="HYDROXYSTEROID DEHYDROGENASE-LIKE PROTEIN 1"/>
    <property type="match status" value="1"/>
</dbReference>
<dbReference type="PANTHER" id="PTHR43086">
    <property type="entry name" value="VERY-LONG-CHAIN 3-OXOOACYL-COA REDUCTASE"/>
    <property type="match status" value="1"/>
</dbReference>
<dbReference type="Pfam" id="PF00106">
    <property type="entry name" value="adh_short"/>
    <property type="match status" value="1"/>
</dbReference>
<dbReference type="PIRSF" id="PIRSF000126">
    <property type="entry name" value="11-beta-HSD1"/>
    <property type="match status" value="1"/>
</dbReference>
<dbReference type="PRINTS" id="PR00081">
    <property type="entry name" value="GDHRDH"/>
</dbReference>
<dbReference type="SUPFAM" id="SSF51735">
    <property type="entry name" value="NAD(P)-binding Rossmann-fold domains"/>
    <property type="match status" value="1"/>
</dbReference>
<dbReference type="PROSITE" id="PS00061">
    <property type="entry name" value="ADH_SHORT"/>
    <property type="match status" value="1"/>
</dbReference>
<keyword id="KW-0256">Endoplasmic reticulum</keyword>
<keyword id="KW-0275">Fatty acid biosynthesis</keyword>
<keyword id="KW-0276">Fatty acid metabolism</keyword>
<keyword id="KW-0444">Lipid biosynthesis</keyword>
<keyword id="KW-0443">Lipid metabolism</keyword>
<keyword id="KW-0472">Membrane</keyword>
<keyword id="KW-0521">NADP</keyword>
<keyword id="KW-0560">Oxidoreductase</keyword>
<keyword id="KW-1185">Reference proteome</keyword>
<keyword id="KW-0812">Transmembrane</keyword>
<keyword id="KW-1133">Transmembrane helix</keyword>
<organism>
    <name type="scientific">Ajellomyces capsulatus (strain NAm1 / WU24)</name>
    <name type="common">Darling's disease fungus</name>
    <name type="synonym">Histoplasma capsulatum</name>
    <dbReference type="NCBI Taxonomy" id="2059318"/>
    <lineage>
        <taxon>Eukaryota</taxon>
        <taxon>Fungi</taxon>
        <taxon>Dikarya</taxon>
        <taxon>Ascomycota</taxon>
        <taxon>Pezizomycotina</taxon>
        <taxon>Eurotiomycetes</taxon>
        <taxon>Eurotiomycetidae</taxon>
        <taxon>Onygenales</taxon>
        <taxon>Ajellomycetaceae</taxon>
        <taxon>Histoplasma</taxon>
    </lineage>
</organism>